<gene>
    <name evidence="1" type="primary">pyrB</name>
    <name type="ordered locus">EFER_4327</name>
</gene>
<comment type="function">
    <text evidence="1">Catalyzes the condensation of carbamoyl phosphate and aspartate to form carbamoyl aspartate and inorganic phosphate, the committed step in the de novo pyrimidine nucleotide biosynthesis pathway.</text>
</comment>
<comment type="catalytic activity">
    <reaction evidence="1">
        <text>carbamoyl phosphate + L-aspartate = N-carbamoyl-L-aspartate + phosphate + H(+)</text>
        <dbReference type="Rhea" id="RHEA:20013"/>
        <dbReference type="ChEBI" id="CHEBI:15378"/>
        <dbReference type="ChEBI" id="CHEBI:29991"/>
        <dbReference type="ChEBI" id="CHEBI:32814"/>
        <dbReference type="ChEBI" id="CHEBI:43474"/>
        <dbReference type="ChEBI" id="CHEBI:58228"/>
        <dbReference type="EC" id="2.1.3.2"/>
    </reaction>
</comment>
<comment type="pathway">
    <text evidence="1">Pyrimidine metabolism; UMP biosynthesis via de novo pathway; (S)-dihydroorotate from bicarbonate: step 2/3.</text>
</comment>
<comment type="subunit">
    <text evidence="1">Heterododecamer (2C3:3R2) of six catalytic PyrB chains organized as two trimers (C3), and six regulatory PyrI chains organized as three dimers (R2).</text>
</comment>
<comment type="similarity">
    <text evidence="1">Belongs to the aspartate/ornithine carbamoyltransferase superfamily. ATCase family.</text>
</comment>
<feature type="chain" id="PRO_1000191909" description="Aspartate carbamoyltransferase catalytic subunit">
    <location>
        <begin position="1"/>
        <end position="311"/>
    </location>
</feature>
<feature type="binding site" evidence="1">
    <location>
        <position position="55"/>
    </location>
    <ligand>
        <name>carbamoyl phosphate</name>
        <dbReference type="ChEBI" id="CHEBI:58228"/>
    </ligand>
</feature>
<feature type="binding site" evidence="1">
    <location>
        <position position="56"/>
    </location>
    <ligand>
        <name>carbamoyl phosphate</name>
        <dbReference type="ChEBI" id="CHEBI:58228"/>
    </ligand>
</feature>
<feature type="binding site" evidence="1">
    <location>
        <position position="85"/>
    </location>
    <ligand>
        <name>L-aspartate</name>
        <dbReference type="ChEBI" id="CHEBI:29991"/>
    </ligand>
</feature>
<feature type="binding site" evidence="1">
    <location>
        <position position="106"/>
    </location>
    <ligand>
        <name>carbamoyl phosphate</name>
        <dbReference type="ChEBI" id="CHEBI:58228"/>
    </ligand>
</feature>
<feature type="binding site" evidence="1">
    <location>
        <position position="135"/>
    </location>
    <ligand>
        <name>carbamoyl phosphate</name>
        <dbReference type="ChEBI" id="CHEBI:58228"/>
    </ligand>
</feature>
<feature type="binding site" evidence="1">
    <location>
        <position position="138"/>
    </location>
    <ligand>
        <name>carbamoyl phosphate</name>
        <dbReference type="ChEBI" id="CHEBI:58228"/>
    </ligand>
</feature>
<feature type="binding site" evidence="1">
    <location>
        <position position="168"/>
    </location>
    <ligand>
        <name>L-aspartate</name>
        <dbReference type="ChEBI" id="CHEBI:29991"/>
    </ligand>
</feature>
<feature type="binding site" evidence="1">
    <location>
        <position position="230"/>
    </location>
    <ligand>
        <name>L-aspartate</name>
        <dbReference type="ChEBI" id="CHEBI:29991"/>
    </ligand>
</feature>
<feature type="binding site" evidence="1">
    <location>
        <position position="268"/>
    </location>
    <ligand>
        <name>carbamoyl phosphate</name>
        <dbReference type="ChEBI" id="CHEBI:58228"/>
    </ligand>
</feature>
<feature type="binding site" evidence="1">
    <location>
        <position position="269"/>
    </location>
    <ligand>
        <name>carbamoyl phosphate</name>
        <dbReference type="ChEBI" id="CHEBI:58228"/>
    </ligand>
</feature>
<proteinExistence type="inferred from homology"/>
<reference key="1">
    <citation type="journal article" date="2009" name="PLoS Genet.">
        <title>Organised genome dynamics in the Escherichia coli species results in highly diverse adaptive paths.</title>
        <authorList>
            <person name="Touchon M."/>
            <person name="Hoede C."/>
            <person name="Tenaillon O."/>
            <person name="Barbe V."/>
            <person name="Baeriswyl S."/>
            <person name="Bidet P."/>
            <person name="Bingen E."/>
            <person name="Bonacorsi S."/>
            <person name="Bouchier C."/>
            <person name="Bouvet O."/>
            <person name="Calteau A."/>
            <person name="Chiapello H."/>
            <person name="Clermont O."/>
            <person name="Cruveiller S."/>
            <person name="Danchin A."/>
            <person name="Diard M."/>
            <person name="Dossat C."/>
            <person name="Karoui M.E."/>
            <person name="Frapy E."/>
            <person name="Garry L."/>
            <person name="Ghigo J.M."/>
            <person name="Gilles A.M."/>
            <person name="Johnson J."/>
            <person name="Le Bouguenec C."/>
            <person name="Lescat M."/>
            <person name="Mangenot S."/>
            <person name="Martinez-Jehanne V."/>
            <person name="Matic I."/>
            <person name="Nassif X."/>
            <person name="Oztas S."/>
            <person name="Petit M.A."/>
            <person name="Pichon C."/>
            <person name="Rouy Z."/>
            <person name="Ruf C.S."/>
            <person name="Schneider D."/>
            <person name="Tourret J."/>
            <person name="Vacherie B."/>
            <person name="Vallenet D."/>
            <person name="Medigue C."/>
            <person name="Rocha E.P.C."/>
            <person name="Denamur E."/>
        </authorList>
    </citation>
    <scope>NUCLEOTIDE SEQUENCE [LARGE SCALE GENOMIC DNA]</scope>
    <source>
        <strain>ATCC 35469 / DSM 13698 / BCRC 15582 / CCUG 18766 / IAM 14443 / JCM 21226 / LMG 7866 / NBRC 102419 / NCTC 12128 / CDC 0568-73</strain>
    </source>
</reference>
<organism>
    <name type="scientific">Escherichia fergusonii (strain ATCC 35469 / DSM 13698 / CCUG 18766 / IAM 14443 / JCM 21226 / LMG 7866 / NBRC 102419 / NCTC 12128 / CDC 0568-73)</name>
    <dbReference type="NCBI Taxonomy" id="585054"/>
    <lineage>
        <taxon>Bacteria</taxon>
        <taxon>Pseudomonadati</taxon>
        <taxon>Pseudomonadota</taxon>
        <taxon>Gammaproteobacteria</taxon>
        <taxon>Enterobacterales</taxon>
        <taxon>Enterobacteriaceae</taxon>
        <taxon>Escherichia</taxon>
    </lineage>
</organism>
<name>PYRB_ESCF3</name>
<accession>B7LMR8</accession>
<sequence length="311" mass="34485">MANPLYQKHIISINDLSRDELNLVLATAAKLKANPQPELLKHKVIASCFFEASTRTRLSFETSMHRLGASVVGFSDSANTSLGKKGETLADTISVISTYVDAIVMRHPQEGAARLATEFSGNVPVLNAGDGSNQHPTQTLLDLFTIQETQGRLDNLHIAMVGDLKYGRTVHSLTQALAKFDGNRFYFIAPDALAMPQYILDMLDEKGIAWSLHSSIEEVMAEVDILYMTRVQKERLDPSEYANVKAQFVLRASDLHNAKTNMKVLHPLPRVDEIATDVDKTPHAWYFQQAGNGIFARQALLALVLNRDLVL</sequence>
<evidence type="ECO:0000255" key="1">
    <source>
        <dbReference type="HAMAP-Rule" id="MF_00001"/>
    </source>
</evidence>
<protein>
    <recommendedName>
        <fullName evidence="1">Aspartate carbamoyltransferase catalytic subunit</fullName>
        <ecNumber evidence="1">2.1.3.2</ecNumber>
    </recommendedName>
    <alternativeName>
        <fullName evidence="1">Aspartate transcarbamylase</fullName>
        <shortName evidence="1">ATCase</shortName>
    </alternativeName>
</protein>
<keyword id="KW-0665">Pyrimidine biosynthesis</keyword>
<keyword id="KW-0808">Transferase</keyword>
<dbReference type="EC" id="2.1.3.2" evidence="1"/>
<dbReference type="EMBL" id="CU928158">
    <property type="protein sequence ID" value="CAQ91746.1"/>
    <property type="molecule type" value="Genomic_DNA"/>
</dbReference>
<dbReference type="RefSeq" id="WP_000013065.1">
    <property type="nucleotide sequence ID" value="NC_011740.1"/>
</dbReference>
<dbReference type="SMR" id="B7LMR8"/>
<dbReference type="GeneID" id="75059088"/>
<dbReference type="KEGG" id="efe:EFER_4327"/>
<dbReference type="HOGENOM" id="CLU_043846_1_2_6"/>
<dbReference type="OrthoDB" id="9774690at2"/>
<dbReference type="UniPathway" id="UPA00070">
    <property type="reaction ID" value="UER00116"/>
</dbReference>
<dbReference type="Proteomes" id="UP000000745">
    <property type="component" value="Chromosome"/>
</dbReference>
<dbReference type="GO" id="GO:0005829">
    <property type="term" value="C:cytosol"/>
    <property type="evidence" value="ECO:0007669"/>
    <property type="project" value="TreeGrafter"/>
</dbReference>
<dbReference type="GO" id="GO:0016597">
    <property type="term" value="F:amino acid binding"/>
    <property type="evidence" value="ECO:0007669"/>
    <property type="project" value="InterPro"/>
</dbReference>
<dbReference type="GO" id="GO:0004070">
    <property type="term" value="F:aspartate carbamoyltransferase activity"/>
    <property type="evidence" value="ECO:0007669"/>
    <property type="project" value="UniProtKB-UniRule"/>
</dbReference>
<dbReference type="GO" id="GO:0006207">
    <property type="term" value="P:'de novo' pyrimidine nucleobase biosynthetic process"/>
    <property type="evidence" value="ECO:0007669"/>
    <property type="project" value="InterPro"/>
</dbReference>
<dbReference type="GO" id="GO:0044205">
    <property type="term" value="P:'de novo' UMP biosynthetic process"/>
    <property type="evidence" value="ECO:0007669"/>
    <property type="project" value="UniProtKB-UniRule"/>
</dbReference>
<dbReference type="GO" id="GO:0006520">
    <property type="term" value="P:amino acid metabolic process"/>
    <property type="evidence" value="ECO:0007669"/>
    <property type="project" value="InterPro"/>
</dbReference>
<dbReference type="FunFam" id="3.40.50.1370:FF:000001">
    <property type="entry name" value="Aspartate carbamoyltransferase"/>
    <property type="match status" value="1"/>
</dbReference>
<dbReference type="FunFam" id="3.40.50.1370:FF:000002">
    <property type="entry name" value="Aspartate carbamoyltransferase 2"/>
    <property type="match status" value="1"/>
</dbReference>
<dbReference type="Gene3D" id="3.40.50.1370">
    <property type="entry name" value="Aspartate/ornithine carbamoyltransferase"/>
    <property type="match status" value="2"/>
</dbReference>
<dbReference type="HAMAP" id="MF_00001">
    <property type="entry name" value="Asp_carb_tr"/>
    <property type="match status" value="1"/>
</dbReference>
<dbReference type="InterPro" id="IPR006132">
    <property type="entry name" value="Asp/Orn_carbamoyltranf_P-bd"/>
</dbReference>
<dbReference type="InterPro" id="IPR006130">
    <property type="entry name" value="Asp/Orn_carbamoylTrfase"/>
</dbReference>
<dbReference type="InterPro" id="IPR036901">
    <property type="entry name" value="Asp/Orn_carbamoylTrfase_sf"/>
</dbReference>
<dbReference type="InterPro" id="IPR002082">
    <property type="entry name" value="Asp_carbamoyltransf"/>
</dbReference>
<dbReference type="InterPro" id="IPR006131">
    <property type="entry name" value="Asp_carbamoyltransf_Asp/Orn-bd"/>
</dbReference>
<dbReference type="NCBIfam" id="TIGR00670">
    <property type="entry name" value="asp_carb_tr"/>
    <property type="match status" value="1"/>
</dbReference>
<dbReference type="NCBIfam" id="NF002032">
    <property type="entry name" value="PRK00856.1"/>
    <property type="match status" value="1"/>
</dbReference>
<dbReference type="PANTHER" id="PTHR45753:SF6">
    <property type="entry name" value="ASPARTATE CARBAMOYLTRANSFERASE"/>
    <property type="match status" value="1"/>
</dbReference>
<dbReference type="PANTHER" id="PTHR45753">
    <property type="entry name" value="ORNITHINE CARBAMOYLTRANSFERASE, MITOCHONDRIAL"/>
    <property type="match status" value="1"/>
</dbReference>
<dbReference type="Pfam" id="PF00185">
    <property type="entry name" value="OTCace"/>
    <property type="match status" value="1"/>
</dbReference>
<dbReference type="Pfam" id="PF02729">
    <property type="entry name" value="OTCace_N"/>
    <property type="match status" value="1"/>
</dbReference>
<dbReference type="PRINTS" id="PR00100">
    <property type="entry name" value="AOTCASE"/>
</dbReference>
<dbReference type="PRINTS" id="PR00101">
    <property type="entry name" value="ATCASE"/>
</dbReference>
<dbReference type="SUPFAM" id="SSF53671">
    <property type="entry name" value="Aspartate/ornithine carbamoyltransferase"/>
    <property type="match status" value="1"/>
</dbReference>
<dbReference type="PROSITE" id="PS00097">
    <property type="entry name" value="CARBAMOYLTRANSFERASE"/>
    <property type="match status" value="1"/>
</dbReference>